<dbReference type="EC" id="1.-.-.-" evidence="3"/>
<dbReference type="EMBL" id="LC600199">
    <property type="protein sequence ID" value="BCP96884.1"/>
    <property type="molecule type" value="Genomic_DNA"/>
</dbReference>
<dbReference type="SMR" id="A0A8D5M8I1"/>
<dbReference type="UniPathway" id="UPA00213"/>
<dbReference type="GO" id="GO:0016020">
    <property type="term" value="C:membrane"/>
    <property type="evidence" value="ECO:0007669"/>
    <property type="project" value="UniProtKB-SubCell"/>
</dbReference>
<dbReference type="GO" id="GO:0020037">
    <property type="term" value="F:heme binding"/>
    <property type="evidence" value="ECO:0007669"/>
    <property type="project" value="InterPro"/>
</dbReference>
<dbReference type="GO" id="GO:0005506">
    <property type="term" value="F:iron ion binding"/>
    <property type="evidence" value="ECO:0007669"/>
    <property type="project" value="InterPro"/>
</dbReference>
<dbReference type="GO" id="GO:0004497">
    <property type="term" value="F:monooxygenase activity"/>
    <property type="evidence" value="ECO:0007669"/>
    <property type="project" value="UniProtKB-KW"/>
</dbReference>
<dbReference type="GO" id="GO:0016705">
    <property type="term" value="F:oxidoreductase activity, acting on paired donors, with incorporation or reduction of molecular oxygen"/>
    <property type="evidence" value="ECO:0007669"/>
    <property type="project" value="InterPro"/>
</dbReference>
<dbReference type="GO" id="GO:0043386">
    <property type="term" value="P:mycotoxin biosynthetic process"/>
    <property type="evidence" value="ECO:0007669"/>
    <property type="project" value="UniProtKB-ARBA"/>
</dbReference>
<dbReference type="CDD" id="cd11041">
    <property type="entry name" value="CYP503A1-like"/>
    <property type="match status" value="1"/>
</dbReference>
<dbReference type="Gene3D" id="1.10.630.10">
    <property type="entry name" value="Cytochrome P450"/>
    <property type="match status" value="1"/>
</dbReference>
<dbReference type="InterPro" id="IPR001128">
    <property type="entry name" value="Cyt_P450"/>
</dbReference>
<dbReference type="InterPro" id="IPR017972">
    <property type="entry name" value="Cyt_P450_CS"/>
</dbReference>
<dbReference type="InterPro" id="IPR002403">
    <property type="entry name" value="Cyt_P450_E_grp-IV"/>
</dbReference>
<dbReference type="InterPro" id="IPR036396">
    <property type="entry name" value="Cyt_P450_sf"/>
</dbReference>
<dbReference type="PANTHER" id="PTHR46206">
    <property type="entry name" value="CYTOCHROME P450"/>
    <property type="match status" value="1"/>
</dbReference>
<dbReference type="PANTHER" id="PTHR46206:SF3">
    <property type="entry name" value="P450, PUTATIVE (EUROFUNG)-RELATED"/>
    <property type="match status" value="1"/>
</dbReference>
<dbReference type="Pfam" id="PF00067">
    <property type="entry name" value="p450"/>
    <property type="match status" value="1"/>
</dbReference>
<dbReference type="PRINTS" id="PR00465">
    <property type="entry name" value="EP450IV"/>
</dbReference>
<dbReference type="PRINTS" id="PR00385">
    <property type="entry name" value="P450"/>
</dbReference>
<dbReference type="SUPFAM" id="SSF48264">
    <property type="entry name" value="Cytochrome P450"/>
    <property type="match status" value="1"/>
</dbReference>
<dbReference type="PROSITE" id="PS00086">
    <property type="entry name" value="CYTOCHROME_P450"/>
    <property type="match status" value="1"/>
</dbReference>
<sequence length="493" mass="56488">MAFYSAVEAVLGVTWLSALFTLGSLSVFWLLRHRERKSQHALHNAWAQISAFDPSSLDRSKTADDWKTTRLGKATLVSNRYAHEIRNDERLSFQLGLEQDFLTTVPGLESLFGGTFHNGIVWDAAMHFSRKLNTVVDPLSEETIEYLQKNWGDDKEWHTVPLHHSMLMLIAQLTARLFIGEELCRDPEWLGIATGYTMDRTFAVKELQQWNPRLIPVVHWFLPSCRKLRATIKKARGFVDRVRTERKQKKTTADDTNRVDAMTWIDSVARDQNCSYDATLTQLRLAYAAVHTTGDMMTKVVAALCENPEMIEPLRKEIISIISEHGWREAALHKMTLLDSVLKESQRIQPLGLYTLSRIALEPITLDDGTQIKKGEQVKISTDHMWNSSIWPDAAQFDGYRFQRFRDNPDQSSAVSFVSLSANHMGFGYGKHACPGRFLAAIEAKVALCHLLLKYDFELENKEASAAQTEGVMIWRDHRAQLRIKRRVEKIEW</sequence>
<accession>A0A8D5M8I1</accession>
<gene>
    <name evidence="4" type="primary">esdpG</name>
</gene>
<organism>
    <name type="scientific">Penicillium shearii</name>
    <name type="common">Eupenicillium shearii</name>
    <dbReference type="NCBI Taxonomy" id="904690"/>
    <lineage>
        <taxon>Eukaryota</taxon>
        <taxon>Fungi</taxon>
        <taxon>Dikarya</taxon>
        <taxon>Ascomycota</taxon>
        <taxon>Pezizomycotina</taxon>
        <taxon>Eurotiomycetes</taxon>
        <taxon>Eurotiomycetidae</taxon>
        <taxon>Eurotiales</taxon>
        <taxon>Aspergillaceae</taxon>
        <taxon>Penicillium</taxon>
    </lineage>
</organism>
<proteinExistence type="evidence at protein level"/>
<name>ESDPG_PENSH</name>
<reference key="1">
    <citation type="journal article" date="2022" name="J. Nat. Prod.">
        <title>Synthetic biology-based discovery of diterpenoid pyrones from the genome of Eupenicillium shearii.</title>
        <authorList>
            <person name="Morishita Y."/>
            <person name="Tsukada K."/>
            <person name="Murakami K."/>
            <person name="Irie K."/>
            <person name="Asai T."/>
        </authorList>
    </citation>
    <scope>NUCLEOTIDE SEQUENCE [GENOMIC DNA]</scope>
    <scope>FUNCTION</scope>
    <scope>CATALYTIC ACTIVITY</scope>
    <scope>PATHWAY</scope>
    <scope>BIOTECHNOLOGY</scope>
    <source>
        <strain>IFM 42152</strain>
    </source>
</reference>
<keyword id="KW-0349">Heme</keyword>
<keyword id="KW-0408">Iron</keyword>
<keyword id="KW-0472">Membrane</keyword>
<keyword id="KW-0479">Metal-binding</keyword>
<keyword id="KW-0503">Monooxygenase</keyword>
<keyword id="KW-0560">Oxidoreductase</keyword>
<keyword id="KW-0812">Transmembrane</keyword>
<keyword id="KW-1133">Transmembrane helix</keyword>
<protein>
    <recommendedName>
        <fullName evidence="4">Cytochrome P450 monooxygenase esdpG</fullName>
        <ecNumber evidence="3">1.-.-.-</ecNumber>
    </recommendedName>
    <alternativeName>
        <fullName evidence="4">Shearone I biosynthesis cluster protein G</fullName>
    </alternativeName>
</protein>
<feature type="chain" id="PRO_0000461039" description="Cytochrome P450 monooxygenase esdpG">
    <location>
        <begin position="1"/>
        <end position="493"/>
    </location>
</feature>
<feature type="transmembrane region" description="Helical" evidence="2">
    <location>
        <begin position="10"/>
        <end position="30"/>
    </location>
</feature>
<feature type="binding site" description="axial binding residue" evidence="1">
    <location>
        <position position="434"/>
    </location>
    <ligand>
        <name>heme</name>
        <dbReference type="ChEBI" id="CHEBI:30413"/>
    </ligand>
    <ligandPart>
        <name>Fe</name>
        <dbReference type="ChEBI" id="CHEBI:18248"/>
    </ligandPart>
</feature>
<evidence type="ECO:0000250" key="1">
    <source>
        <dbReference type="UniProtKB" id="P04798"/>
    </source>
</evidence>
<evidence type="ECO:0000255" key="2"/>
<evidence type="ECO:0000269" key="3">
    <source>
    </source>
</evidence>
<evidence type="ECO:0000303" key="4">
    <source>
    </source>
</evidence>
<evidence type="ECO:0000305" key="5"/>
<comment type="function">
    <text evidence="3">Cytochrome P450 monooxygenasee; part of the cluster that mediates the biosynthesis of shearones, diterpenoid pyrones (DPs) which are structurally diverse meroterpenoids consisting of a diterpene linked by a pyrone, and which may exhibit a range of bioactivities (PubMed:35057611). Whitin the pathway, esdpG takes part in the molecular scaffold modification via the hydroxylation at C-11 and C-12 and can transform shearone A into shearone C and shearone B into shearone D (PubMed:35057611). The molecular scaffold is commonly biosynthesized by a series of enzymes including the non-reducing polyketide synthase (NR-PKS) esdpA that generates an alpha-pyrone; the prenyltransferase esdpC that attaches a geranylgeranyl pyrophosphate (GGPP) produced by the GGPP synthase (GGPPS) esdpD onto the pyrone unit; the FAD-dependent monooxygenase esdpE that converts an olefin on the diterpene unit into an epoxide; and the terpene cyclase esdpB that catalyzes the cyclization reactions to give the molecular backbone shearone A (PubMed:35057611). In the modification steps, esdpF oxidizes the hydroxy group to a ketone at C-3 and esdpG then attaches hydroxy groups at both C-11 and C-12. After that, esdpI hydroxylates at C-20 and esdpH hydroxylates at C-6'. The ether bridge is generated by nucleophilic attack of the hydroxy group at C-20 to the carbonyl carbon at C-3. EsdpH can also functions prior to esdpI. The different combinations of these modification enzymes lead to the production of diverse shearone derivatives, shearone I being the end product of the pathway (PubMed:35057611). The alpha-ketoglutarate-dependent dioxygenase esdpJ seems not to be involved in this pathway (PubMed:35057611).</text>
</comment>
<comment type="cofactor">
    <cofactor evidence="1">
        <name>heme</name>
        <dbReference type="ChEBI" id="CHEBI:30413"/>
    </cofactor>
</comment>
<comment type="pathway">
    <text evidence="3">Secondary metabolite biosynthesis; terpenoid biosynthesis.</text>
</comment>
<comment type="subcellular location">
    <subcellularLocation>
        <location evidence="2">Membrane</location>
        <topology evidence="2">Single-pass membrane protein</topology>
    </subcellularLocation>
</comment>
<comment type="biotechnology">
    <text evidence="3">Shearone derivatives produced by this cluster are interesting candidates for Alzheimer's disease (AD) therapy since they moderately inhibit aggregation of amyloid beta 42 (Abeta42).</text>
</comment>
<comment type="similarity">
    <text evidence="5">Belongs to the cytochrome P450 family.</text>
</comment>